<protein>
    <recommendedName>
        <fullName evidence="1">Flagellar L-ring protein</fullName>
    </recommendedName>
    <alternativeName>
        <fullName evidence="1">Basal body L-ring protein</fullName>
    </alternativeName>
</protein>
<keyword id="KW-0975">Bacterial flagellum</keyword>
<keyword id="KW-0998">Cell outer membrane</keyword>
<keyword id="KW-0449">Lipoprotein</keyword>
<keyword id="KW-0472">Membrane</keyword>
<keyword id="KW-0564">Palmitate</keyword>
<keyword id="KW-0732">Signal</keyword>
<proteinExistence type="inferred from homology"/>
<organism>
    <name type="scientific">Pseudomonas aeruginosa (strain UCBPP-PA14)</name>
    <dbReference type="NCBI Taxonomy" id="208963"/>
    <lineage>
        <taxon>Bacteria</taxon>
        <taxon>Pseudomonadati</taxon>
        <taxon>Pseudomonadota</taxon>
        <taxon>Gammaproteobacteria</taxon>
        <taxon>Pseudomonadales</taxon>
        <taxon>Pseudomonadaceae</taxon>
        <taxon>Pseudomonas</taxon>
    </lineage>
</organism>
<sequence>MNRLMIVSLLGIATALGGCVSPPPKPNDPYYAPVLPRTPLPAAQNNGAIYQAGFEQNLYDDRKAFRVGDIITITLNEKTQASKKANSDIQKDSKTKMGLTSLFGSGMTTNNPIGGGDLSLSAEYGGSRDAKGDSQAGQSNSLTGSITVTVAEVLPNGILSVRGEKWMTLNTGNELVRIAGLVRADDIATDNTVSSTRVADARITYSGTGAFADASQPGWLDRFFLSPLWPF</sequence>
<comment type="function">
    <text evidence="1">Assembles around the rod to form the L-ring and probably protects the motor/basal body from shearing forces during rotation.</text>
</comment>
<comment type="subunit">
    <text evidence="1">The basal body constitutes a major portion of the flagellar organelle and consists of four rings (L,P,S, and M) mounted on a central rod.</text>
</comment>
<comment type="subcellular location">
    <subcellularLocation>
        <location evidence="1">Cell outer membrane</location>
        <topology evidence="1">Lipid-anchor</topology>
    </subcellularLocation>
    <subcellularLocation>
        <location evidence="1">Bacterial flagellum basal body</location>
    </subcellularLocation>
</comment>
<comment type="similarity">
    <text evidence="1">Belongs to the FlgH family.</text>
</comment>
<evidence type="ECO:0000255" key="1">
    <source>
        <dbReference type="HAMAP-Rule" id="MF_00415"/>
    </source>
</evidence>
<evidence type="ECO:0000256" key="2">
    <source>
        <dbReference type="SAM" id="MobiDB-lite"/>
    </source>
</evidence>
<feature type="signal peptide" evidence="1">
    <location>
        <begin position="1"/>
        <end position="18"/>
    </location>
</feature>
<feature type="chain" id="PRO_1000050093" description="Flagellar L-ring protein">
    <location>
        <begin position="19"/>
        <end position="231"/>
    </location>
</feature>
<feature type="region of interest" description="Disordered" evidence="2">
    <location>
        <begin position="118"/>
        <end position="141"/>
    </location>
</feature>
<feature type="lipid moiety-binding region" description="N-palmitoyl cysteine" evidence="1">
    <location>
        <position position="19"/>
    </location>
</feature>
<feature type="lipid moiety-binding region" description="S-diacylglycerol cysteine" evidence="1">
    <location>
        <position position="19"/>
    </location>
</feature>
<accession>Q02IQ0</accession>
<gene>
    <name evidence="1" type="primary">flgH</name>
    <name type="ordered locus">PA14_50420</name>
</gene>
<reference key="1">
    <citation type="journal article" date="2006" name="Genome Biol.">
        <title>Genomic analysis reveals that Pseudomonas aeruginosa virulence is combinatorial.</title>
        <authorList>
            <person name="Lee D.G."/>
            <person name="Urbach J.M."/>
            <person name="Wu G."/>
            <person name="Liberati N.T."/>
            <person name="Feinbaum R.L."/>
            <person name="Miyata S."/>
            <person name="Diggins L.T."/>
            <person name="He J."/>
            <person name="Saucier M."/>
            <person name="Deziel E."/>
            <person name="Friedman L."/>
            <person name="Li L."/>
            <person name="Grills G."/>
            <person name="Montgomery K."/>
            <person name="Kucherlapati R."/>
            <person name="Rahme L.G."/>
            <person name="Ausubel F.M."/>
        </authorList>
    </citation>
    <scope>NUCLEOTIDE SEQUENCE [LARGE SCALE GENOMIC DNA]</scope>
    <source>
        <strain>UCBPP-PA14</strain>
    </source>
</reference>
<name>FLGH_PSEAB</name>
<dbReference type="EMBL" id="CP000438">
    <property type="protein sequence ID" value="ABJ10248.1"/>
    <property type="molecule type" value="Genomic_DNA"/>
</dbReference>
<dbReference type="RefSeq" id="WP_003086407.1">
    <property type="nucleotide sequence ID" value="NZ_CP034244.1"/>
</dbReference>
<dbReference type="SMR" id="Q02IQ0"/>
<dbReference type="KEGG" id="pau:PA14_50420"/>
<dbReference type="PseudoCAP" id="PA14_50420"/>
<dbReference type="HOGENOM" id="CLU_069313_0_2_6"/>
<dbReference type="BioCyc" id="PAER208963:G1G74-4230-MONOMER"/>
<dbReference type="Proteomes" id="UP000000653">
    <property type="component" value="Chromosome"/>
</dbReference>
<dbReference type="GO" id="GO:0009427">
    <property type="term" value="C:bacterial-type flagellum basal body, distal rod, L ring"/>
    <property type="evidence" value="ECO:0007669"/>
    <property type="project" value="InterPro"/>
</dbReference>
<dbReference type="GO" id="GO:0009279">
    <property type="term" value="C:cell outer membrane"/>
    <property type="evidence" value="ECO:0007669"/>
    <property type="project" value="UniProtKB-SubCell"/>
</dbReference>
<dbReference type="GO" id="GO:0003774">
    <property type="term" value="F:cytoskeletal motor activity"/>
    <property type="evidence" value="ECO:0007669"/>
    <property type="project" value="InterPro"/>
</dbReference>
<dbReference type="GO" id="GO:0071973">
    <property type="term" value="P:bacterial-type flagellum-dependent cell motility"/>
    <property type="evidence" value="ECO:0007669"/>
    <property type="project" value="InterPro"/>
</dbReference>
<dbReference type="HAMAP" id="MF_00415">
    <property type="entry name" value="FlgH"/>
    <property type="match status" value="1"/>
</dbReference>
<dbReference type="InterPro" id="IPR000527">
    <property type="entry name" value="Flag_Lring"/>
</dbReference>
<dbReference type="NCBIfam" id="NF001304">
    <property type="entry name" value="PRK00249.1-4"/>
    <property type="match status" value="1"/>
</dbReference>
<dbReference type="PANTHER" id="PTHR34933">
    <property type="entry name" value="FLAGELLAR L-RING PROTEIN"/>
    <property type="match status" value="1"/>
</dbReference>
<dbReference type="PANTHER" id="PTHR34933:SF1">
    <property type="entry name" value="FLAGELLAR L-RING PROTEIN"/>
    <property type="match status" value="1"/>
</dbReference>
<dbReference type="Pfam" id="PF02107">
    <property type="entry name" value="FlgH"/>
    <property type="match status" value="1"/>
</dbReference>
<dbReference type="PRINTS" id="PR01008">
    <property type="entry name" value="FLGLRINGFLGH"/>
</dbReference>
<dbReference type="PROSITE" id="PS51257">
    <property type="entry name" value="PROKAR_LIPOPROTEIN"/>
    <property type="match status" value="1"/>
</dbReference>